<evidence type="ECO:0000255" key="1">
    <source>
        <dbReference type="HAMAP-Rule" id="MF_00270"/>
    </source>
</evidence>
<evidence type="ECO:0000305" key="2"/>
<keyword id="KW-0687">Ribonucleoprotein</keyword>
<keyword id="KW-0689">Ribosomal protein</keyword>
<keyword id="KW-0694">RNA-binding</keyword>
<keyword id="KW-0699">rRNA-binding</keyword>
<comment type="function">
    <text evidence="1">Binds as a heterodimer with protein bS6 to the central domain of the 16S rRNA, where it helps stabilize the platform of the 30S subunit.</text>
</comment>
<comment type="subunit">
    <text evidence="1">Part of the 30S ribosomal subunit. Forms a tight heterodimer with protein bS6.</text>
</comment>
<comment type="similarity">
    <text evidence="1">Belongs to the bacterial ribosomal protein bS18 family.</text>
</comment>
<proteinExistence type="inferred from homology"/>
<protein>
    <recommendedName>
        <fullName evidence="1">Small ribosomal subunit protein bS18</fullName>
    </recommendedName>
    <alternativeName>
        <fullName evidence="2">30S ribosomal protein S18</fullName>
    </alternativeName>
</protein>
<name>RS18_MESHJ</name>
<gene>
    <name evidence="1" type="primary">rpsR</name>
    <name type="ordered locus">MHJ_0285</name>
</gene>
<sequence length="87" mass="10285">MNKKYAKKFKKKPCQFCEAKLFYIDYKDIEVLQRFINTFGKIQPSRITGNCAKHQRKLALAVKRARFVALLPFIGDRIRGNYDKTRV</sequence>
<accession>Q4AA45</accession>
<organism>
    <name type="scientific">Mesomycoplasma hyopneumoniae (strain J / ATCC 25934 / NCTC 10110)</name>
    <name type="common">Mycoplasma hyopneumoniae</name>
    <dbReference type="NCBI Taxonomy" id="262719"/>
    <lineage>
        <taxon>Bacteria</taxon>
        <taxon>Bacillati</taxon>
        <taxon>Mycoplasmatota</taxon>
        <taxon>Mycoplasmoidales</taxon>
        <taxon>Metamycoplasmataceae</taxon>
        <taxon>Mesomycoplasma</taxon>
    </lineage>
</organism>
<reference key="1">
    <citation type="journal article" date="2005" name="J. Bacteriol.">
        <title>Swine and poultry pathogens: the complete genome sequences of two strains of Mycoplasma hyopneumoniae and a strain of Mycoplasma synoviae.</title>
        <authorList>
            <person name="Vasconcelos A.T.R."/>
            <person name="Ferreira H.B."/>
            <person name="Bizarro C.V."/>
            <person name="Bonatto S.L."/>
            <person name="Carvalho M.O."/>
            <person name="Pinto P.M."/>
            <person name="Almeida D.F."/>
            <person name="Almeida L.G.P."/>
            <person name="Almeida R."/>
            <person name="Alves-Junior L."/>
            <person name="Assuncao E.N."/>
            <person name="Azevedo V.A.C."/>
            <person name="Bogo M.R."/>
            <person name="Brigido M.M."/>
            <person name="Brocchi M."/>
            <person name="Burity H.A."/>
            <person name="Camargo A.A."/>
            <person name="Camargo S.S."/>
            <person name="Carepo M.S."/>
            <person name="Carraro D.M."/>
            <person name="de Mattos Cascardo J.C."/>
            <person name="Castro L.A."/>
            <person name="Cavalcanti G."/>
            <person name="Chemale G."/>
            <person name="Collevatti R.G."/>
            <person name="Cunha C.W."/>
            <person name="Dallagiovanna B."/>
            <person name="Dambros B.P."/>
            <person name="Dellagostin O.A."/>
            <person name="Falcao C."/>
            <person name="Fantinatti-Garboggini F."/>
            <person name="Felipe M.S.S."/>
            <person name="Fiorentin L."/>
            <person name="Franco G.R."/>
            <person name="Freitas N.S.A."/>
            <person name="Frias D."/>
            <person name="Grangeiro T.B."/>
            <person name="Grisard E.C."/>
            <person name="Guimaraes C.T."/>
            <person name="Hungria M."/>
            <person name="Jardim S.N."/>
            <person name="Krieger M.A."/>
            <person name="Laurino J.P."/>
            <person name="Lima L.F.A."/>
            <person name="Lopes M.I."/>
            <person name="Loreto E.L.S."/>
            <person name="Madeira H.M.F."/>
            <person name="Manfio G.P."/>
            <person name="Maranhao A.Q."/>
            <person name="Martinkovics C.T."/>
            <person name="Medeiros S.R.B."/>
            <person name="Moreira M.A.M."/>
            <person name="Neiva M."/>
            <person name="Ramalho-Neto C.E."/>
            <person name="Nicolas M.F."/>
            <person name="Oliveira S.C."/>
            <person name="Paixao R.F.C."/>
            <person name="Pedrosa F.O."/>
            <person name="Pena S.D.J."/>
            <person name="Pereira M."/>
            <person name="Pereira-Ferrari L."/>
            <person name="Piffer I."/>
            <person name="Pinto L.S."/>
            <person name="Potrich D.P."/>
            <person name="Salim A.C.M."/>
            <person name="Santos F.R."/>
            <person name="Schmitt R."/>
            <person name="Schneider M.P.C."/>
            <person name="Schrank A."/>
            <person name="Schrank I.S."/>
            <person name="Schuck A.F."/>
            <person name="Seuanez H.N."/>
            <person name="Silva D.W."/>
            <person name="Silva R."/>
            <person name="Silva S.C."/>
            <person name="Soares C.M.A."/>
            <person name="Souza K.R.L."/>
            <person name="Souza R.C."/>
            <person name="Staats C.C."/>
            <person name="Steffens M.B.R."/>
            <person name="Teixeira S.M.R."/>
            <person name="Urmenyi T.P."/>
            <person name="Vainstein M.H."/>
            <person name="Zuccherato L.W."/>
            <person name="Simpson A.J.G."/>
            <person name="Zaha A."/>
        </authorList>
    </citation>
    <scope>NUCLEOTIDE SEQUENCE [LARGE SCALE GENOMIC DNA]</scope>
    <source>
        <strain>J / ATCC 25934 / NCTC 10110</strain>
    </source>
</reference>
<dbReference type="EMBL" id="AE017243">
    <property type="protein sequence ID" value="AAZ44376.2"/>
    <property type="molecule type" value="Genomic_DNA"/>
</dbReference>
<dbReference type="RefSeq" id="WP_011206141.1">
    <property type="nucleotide sequence ID" value="NC_007295.1"/>
</dbReference>
<dbReference type="SMR" id="Q4AA45"/>
<dbReference type="GeneID" id="41334595"/>
<dbReference type="KEGG" id="mhj:MHJ_0285"/>
<dbReference type="eggNOG" id="COG0238">
    <property type="taxonomic scope" value="Bacteria"/>
</dbReference>
<dbReference type="HOGENOM" id="CLU_148710_2_0_14"/>
<dbReference type="OrthoDB" id="9812008at2"/>
<dbReference type="Proteomes" id="UP000000548">
    <property type="component" value="Chromosome"/>
</dbReference>
<dbReference type="GO" id="GO:0022627">
    <property type="term" value="C:cytosolic small ribosomal subunit"/>
    <property type="evidence" value="ECO:0007669"/>
    <property type="project" value="TreeGrafter"/>
</dbReference>
<dbReference type="GO" id="GO:0070181">
    <property type="term" value="F:small ribosomal subunit rRNA binding"/>
    <property type="evidence" value="ECO:0007669"/>
    <property type="project" value="TreeGrafter"/>
</dbReference>
<dbReference type="GO" id="GO:0003735">
    <property type="term" value="F:structural constituent of ribosome"/>
    <property type="evidence" value="ECO:0007669"/>
    <property type="project" value="InterPro"/>
</dbReference>
<dbReference type="GO" id="GO:0006412">
    <property type="term" value="P:translation"/>
    <property type="evidence" value="ECO:0007669"/>
    <property type="project" value="UniProtKB-UniRule"/>
</dbReference>
<dbReference type="Gene3D" id="4.10.640.10">
    <property type="entry name" value="Ribosomal protein S18"/>
    <property type="match status" value="1"/>
</dbReference>
<dbReference type="HAMAP" id="MF_00270">
    <property type="entry name" value="Ribosomal_bS18"/>
    <property type="match status" value="1"/>
</dbReference>
<dbReference type="InterPro" id="IPR001648">
    <property type="entry name" value="Ribosomal_bS18"/>
</dbReference>
<dbReference type="InterPro" id="IPR036870">
    <property type="entry name" value="Ribosomal_bS18_sf"/>
</dbReference>
<dbReference type="NCBIfam" id="TIGR00165">
    <property type="entry name" value="S18"/>
    <property type="match status" value="1"/>
</dbReference>
<dbReference type="PANTHER" id="PTHR13479">
    <property type="entry name" value="30S RIBOSOMAL PROTEIN S18"/>
    <property type="match status" value="1"/>
</dbReference>
<dbReference type="PANTHER" id="PTHR13479:SF40">
    <property type="entry name" value="SMALL RIBOSOMAL SUBUNIT PROTEIN BS18M"/>
    <property type="match status" value="1"/>
</dbReference>
<dbReference type="Pfam" id="PF01084">
    <property type="entry name" value="Ribosomal_S18"/>
    <property type="match status" value="1"/>
</dbReference>
<dbReference type="PRINTS" id="PR00974">
    <property type="entry name" value="RIBOSOMALS18"/>
</dbReference>
<dbReference type="SUPFAM" id="SSF46911">
    <property type="entry name" value="Ribosomal protein S18"/>
    <property type="match status" value="1"/>
</dbReference>
<feature type="chain" id="PRO_1000003539" description="Small ribosomal subunit protein bS18">
    <location>
        <begin position="1"/>
        <end position="87"/>
    </location>
</feature>